<reference key="1">
    <citation type="journal article" date="2002" name="Proc. Natl. Acad. Sci. U.S.A.">
        <title>Genome sequence of Streptococcus mutans UA159, a cariogenic dental pathogen.</title>
        <authorList>
            <person name="Ajdic D.J."/>
            <person name="McShan W.M."/>
            <person name="McLaughlin R.E."/>
            <person name="Savic G."/>
            <person name="Chang J."/>
            <person name="Carson M.B."/>
            <person name="Primeaux C."/>
            <person name="Tian R."/>
            <person name="Kenton S."/>
            <person name="Jia H.G."/>
            <person name="Lin S.P."/>
            <person name="Qian Y."/>
            <person name="Li S."/>
            <person name="Zhu H."/>
            <person name="Najar F.Z."/>
            <person name="Lai H."/>
            <person name="White J."/>
            <person name="Roe B.A."/>
            <person name="Ferretti J.J."/>
        </authorList>
    </citation>
    <scope>NUCLEOTIDE SEQUENCE [LARGE SCALE GENOMIC DNA]</scope>
    <source>
        <strain>ATCC 700610 / UA159</strain>
    </source>
</reference>
<protein>
    <recommendedName>
        <fullName evidence="1">Arginine repressor</fullName>
    </recommendedName>
</protein>
<dbReference type="EMBL" id="AE014133">
    <property type="protein sequence ID" value="AAN59688.1"/>
    <property type="molecule type" value="Genomic_DNA"/>
</dbReference>
<dbReference type="RefSeq" id="NP_722382.1">
    <property type="nucleotide sequence ID" value="NC_004350.2"/>
</dbReference>
<dbReference type="RefSeq" id="WP_002262400.1">
    <property type="nucleotide sequence ID" value="NC_004350.2"/>
</dbReference>
<dbReference type="SMR" id="Q8DRW6"/>
<dbReference type="STRING" id="210007.SMU_2093"/>
<dbReference type="GeneID" id="93860308"/>
<dbReference type="KEGG" id="smu:SMU_2093"/>
<dbReference type="PATRIC" id="fig|210007.7.peg.1863"/>
<dbReference type="eggNOG" id="COG1438">
    <property type="taxonomic scope" value="Bacteria"/>
</dbReference>
<dbReference type="HOGENOM" id="CLU_097103_3_0_9"/>
<dbReference type="OrthoDB" id="9807089at2"/>
<dbReference type="PhylomeDB" id="Q8DRW6"/>
<dbReference type="UniPathway" id="UPA00068"/>
<dbReference type="Proteomes" id="UP000002512">
    <property type="component" value="Chromosome"/>
</dbReference>
<dbReference type="GO" id="GO:0005737">
    <property type="term" value="C:cytoplasm"/>
    <property type="evidence" value="ECO:0007669"/>
    <property type="project" value="UniProtKB-SubCell"/>
</dbReference>
<dbReference type="GO" id="GO:0034618">
    <property type="term" value="F:arginine binding"/>
    <property type="evidence" value="ECO:0007669"/>
    <property type="project" value="InterPro"/>
</dbReference>
<dbReference type="GO" id="GO:0003677">
    <property type="term" value="F:DNA binding"/>
    <property type="evidence" value="ECO:0007669"/>
    <property type="project" value="UniProtKB-KW"/>
</dbReference>
<dbReference type="GO" id="GO:0003700">
    <property type="term" value="F:DNA-binding transcription factor activity"/>
    <property type="evidence" value="ECO:0007669"/>
    <property type="project" value="UniProtKB-UniRule"/>
</dbReference>
<dbReference type="GO" id="GO:0006526">
    <property type="term" value="P:L-arginine biosynthetic process"/>
    <property type="evidence" value="ECO:0007669"/>
    <property type="project" value="UniProtKB-UniPathway"/>
</dbReference>
<dbReference type="GO" id="GO:0051259">
    <property type="term" value="P:protein complex oligomerization"/>
    <property type="evidence" value="ECO:0007669"/>
    <property type="project" value="InterPro"/>
</dbReference>
<dbReference type="GO" id="GO:1900079">
    <property type="term" value="P:regulation of arginine biosynthetic process"/>
    <property type="evidence" value="ECO:0007669"/>
    <property type="project" value="UniProtKB-UniRule"/>
</dbReference>
<dbReference type="Gene3D" id="3.30.1360.40">
    <property type="match status" value="1"/>
</dbReference>
<dbReference type="Gene3D" id="1.10.10.10">
    <property type="entry name" value="Winged helix-like DNA-binding domain superfamily/Winged helix DNA-binding domain"/>
    <property type="match status" value="1"/>
</dbReference>
<dbReference type="HAMAP" id="MF_00173">
    <property type="entry name" value="Arg_repressor"/>
    <property type="match status" value="1"/>
</dbReference>
<dbReference type="InterPro" id="IPR001669">
    <property type="entry name" value="Arg_repress"/>
</dbReference>
<dbReference type="InterPro" id="IPR020899">
    <property type="entry name" value="Arg_repress_C"/>
</dbReference>
<dbReference type="InterPro" id="IPR036251">
    <property type="entry name" value="Arg_repress_C_sf"/>
</dbReference>
<dbReference type="InterPro" id="IPR020900">
    <property type="entry name" value="Arg_repress_DNA-bd"/>
</dbReference>
<dbReference type="InterPro" id="IPR036388">
    <property type="entry name" value="WH-like_DNA-bd_sf"/>
</dbReference>
<dbReference type="InterPro" id="IPR036390">
    <property type="entry name" value="WH_DNA-bd_sf"/>
</dbReference>
<dbReference type="NCBIfam" id="TIGR01529">
    <property type="entry name" value="argR_whole"/>
    <property type="match status" value="1"/>
</dbReference>
<dbReference type="PANTHER" id="PTHR34471">
    <property type="entry name" value="ARGININE REPRESSOR"/>
    <property type="match status" value="1"/>
</dbReference>
<dbReference type="PANTHER" id="PTHR34471:SF1">
    <property type="entry name" value="ARGININE REPRESSOR"/>
    <property type="match status" value="1"/>
</dbReference>
<dbReference type="Pfam" id="PF01316">
    <property type="entry name" value="Arg_repressor"/>
    <property type="match status" value="1"/>
</dbReference>
<dbReference type="Pfam" id="PF02863">
    <property type="entry name" value="Arg_repressor_C"/>
    <property type="match status" value="1"/>
</dbReference>
<dbReference type="PRINTS" id="PR01467">
    <property type="entry name" value="ARGREPRESSOR"/>
</dbReference>
<dbReference type="SUPFAM" id="SSF55252">
    <property type="entry name" value="C-terminal domain of arginine repressor"/>
    <property type="match status" value="1"/>
</dbReference>
<dbReference type="SUPFAM" id="SSF46785">
    <property type="entry name" value="Winged helix' DNA-binding domain"/>
    <property type="match status" value="1"/>
</dbReference>
<sequence>MNKLSRQNKIKQIIRSKHIGTQEELKHQLELEKVFVTQATLSRDMRELGLFKSRDKEGYLYYEIPENGSTIFTPAALYYIKKVFRTDALLVFHTNLGEADVLANLIDSESHSEILGTVAGADTLLVICKNEEIASQLESDVLSNL</sequence>
<proteinExistence type="inferred from homology"/>
<feature type="chain" id="PRO_0000205125" description="Arginine repressor">
    <location>
        <begin position="1"/>
        <end position="145"/>
    </location>
</feature>
<organism>
    <name type="scientific">Streptococcus mutans serotype c (strain ATCC 700610 / UA159)</name>
    <dbReference type="NCBI Taxonomy" id="210007"/>
    <lineage>
        <taxon>Bacteria</taxon>
        <taxon>Bacillati</taxon>
        <taxon>Bacillota</taxon>
        <taxon>Bacilli</taxon>
        <taxon>Lactobacillales</taxon>
        <taxon>Streptococcaceae</taxon>
        <taxon>Streptococcus</taxon>
    </lineage>
</organism>
<name>ARGR_STRMU</name>
<accession>Q8DRW6</accession>
<gene>
    <name evidence="1" type="primary">argR</name>
    <name type="ordered locus">SMU_2093</name>
</gene>
<evidence type="ECO:0000255" key="1">
    <source>
        <dbReference type="HAMAP-Rule" id="MF_00173"/>
    </source>
</evidence>
<keyword id="KW-0028">Amino-acid biosynthesis</keyword>
<keyword id="KW-0055">Arginine biosynthesis</keyword>
<keyword id="KW-0963">Cytoplasm</keyword>
<keyword id="KW-0238">DNA-binding</keyword>
<keyword id="KW-1185">Reference proteome</keyword>
<keyword id="KW-0678">Repressor</keyword>
<keyword id="KW-0804">Transcription</keyword>
<keyword id="KW-0805">Transcription regulation</keyword>
<comment type="function">
    <text evidence="1">Regulates arginine biosynthesis genes.</text>
</comment>
<comment type="pathway">
    <text>Amino-acid biosynthesis; L-arginine biosynthesis [regulation].</text>
</comment>
<comment type="subcellular location">
    <subcellularLocation>
        <location evidence="1">Cytoplasm</location>
    </subcellularLocation>
</comment>
<comment type="similarity">
    <text evidence="1">Belongs to the ArgR family.</text>
</comment>